<proteinExistence type="evidence at protein level"/>
<keyword id="KW-0217">Developmental protein</keyword>
<keyword id="KW-0238">DNA-binding</keyword>
<keyword id="KW-0371">Homeobox</keyword>
<keyword id="KW-0539">Nucleus</keyword>
<keyword id="KW-0597">Phosphoprotein</keyword>
<keyword id="KW-1267">Proteomics identification</keyword>
<keyword id="KW-1185">Reference proteome</keyword>
<keyword id="KW-0804">Transcription</keyword>
<keyword id="KW-0805">Transcription regulation</keyword>
<name>HXB4_HUMAN</name>
<feature type="chain" id="PRO_0000200122" description="Homeobox protein Hox-B4">
    <location>
        <begin position="1"/>
        <end position="251"/>
    </location>
</feature>
<feature type="DNA-binding region" description="Homeobox" evidence="1">
    <location>
        <begin position="162"/>
        <end position="221"/>
    </location>
</feature>
<feature type="region of interest" description="Disordered" evidence="2">
    <location>
        <begin position="1"/>
        <end position="134"/>
    </location>
</feature>
<feature type="region of interest" description="Disordered" evidence="2">
    <location>
        <begin position="220"/>
        <end position="251"/>
    </location>
</feature>
<feature type="short sequence motif" description="Antp-type hexapeptide">
    <location>
        <begin position="141"/>
        <end position="146"/>
    </location>
</feature>
<feature type="compositionally biased region" description="Polar residues" evidence="2">
    <location>
        <begin position="1"/>
        <end position="12"/>
    </location>
</feature>
<feature type="compositionally biased region" description="Pro residues" evidence="2">
    <location>
        <begin position="71"/>
        <end position="99"/>
    </location>
</feature>
<feature type="modified residue" description="Phosphoserine" evidence="4">
    <location>
        <position position="90"/>
    </location>
</feature>
<comment type="function">
    <text>Sequence-specific transcription factor which is part of a developmental regulatory system that provides cells with specific positional identities on the anterior-posterior axis.</text>
</comment>
<comment type="subcellular location">
    <subcellularLocation>
        <location>Nucleus</location>
    </subcellularLocation>
</comment>
<comment type="developmental stage">
    <text>Expressed in whole embryos and fetuses at 5-9 weeks from conception.</text>
</comment>
<comment type="similarity">
    <text evidence="3">Belongs to the Antp homeobox family. Deformed subfamily.</text>
</comment>
<reference key="1">
    <citation type="journal article" date="1990" name="Differentiation">
        <title>Expression of HOX homeogenes in human neuroblastoma cell culture lines.</title>
        <authorList>
            <person name="Peverali F.A."/>
            <person name="D'Esposito M."/>
            <person name="Acampora D."/>
            <person name="Bunone G."/>
            <person name="Negri M."/>
            <person name="Faiella A."/>
            <person name="Stornaiuolo A."/>
            <person name="Pannese M."/>
            <person name="Migliaccio E."/>
            <person name="Simeone A."/>
            <person name="Valle G.D."/>
            <person name="Boncinelli E."/>
        </authorList>
    </citation>
    <scope>NUCLEOTIDE SEQUENCE [GENOMIC DNA]</scope>
</reference>
<reference key="2">
    <citation type="journal article" date="2000" name="Am. J. Hum. Genet.">
        <title>Overall linkage disequilibrium in 33 populations for highly informative multisite haplotypes spanning the HOXB gene cluster.</title>
        <authorList>
            <person name="Kidd K.K."/>
            <person name="Busygina V."/>
            <person name="DeMille M.M.C."/>
            <person name="Speed W.C."/>
            <person name="Ruggeri V."/>
            <person name="Kidd J.R."/>
            <person name="Pakstis A.J."/>
        </authorList>
    </citation>
    <scope>NUCLEOTIDE SEQUENCE [GENOMIC DNA]</scope>
</reference>
<reference key="3">
    <citation type="journal article" date="2000" name="J. Exp. Med.">
        <title>Hematopoietic expression of HOXB4 is regulated in normal and leukemic stem cells through transcriptional activation of the HOXB4 promoter by upstream stimulating factor (USF)-1 and USF-2.</title>
        <authorList>
            <person name="Giannola D.M."/>
            <person name="Shlomchik W.D."/>
            <person name="Jegathesan M."/>
            <person name="Liebowitz D."/>
            <person name="Abrams C.S."/>
            <person name="Kadesch T."/>
            <person name="Dancis A."/>
            <person name="Emerson S.G."/>
        </authorList>
    </citation>
    <scope>NUCLEOTIDE SEQUENCE [GENOMIC DNA]</scope>
</reference>
<reference key="4">
    <citation type="journal article" date="2004" name="Genome Res.">
        <title>The status, quality, and expansion of the NIH full-length cDNA project: the Mammalian Gene Collection (MGC).</title>
        <authorList>
            <consortium name="The MGC Project Team"/>
        </authorList>
    </citation>
    <scope>NUCLEOTIDE SEQUENCE [LARGE SCALE MRNA]</scope>
    <source>
        <tissue>Uterus</tissue>
    </source>
</reference>
<reference key="5">
    <citation type="journal article" date="2007" name="BMC Genomics">
        <title>The full-ORF clone resource of the German cDNA consortium.</title>
        <authorList>
            <person name="Bechtel S."/>
            <person name="Rosenfelder H."/>
            <person name="Duda A."/>
            <person name="Schmidt C.P."/>
            <person name="Ernst U."/>
            <person name="Wellenreuther R."/>
            <person name="Mehrle A."/>
            <person name="Schuster C."/>
            <person name="Bahr A."/>
            <person name="Bloecker H."/>
            <person name="Heubner D."/>
            <person name="Hoerlein A."/>
            <person name="Michel G."/>
            <person name="Wedler H."/>
            <person name="Koehrer K."/>
            <person name="Ottenwaelder B."/>
            <person name="Poustka A."/>
            <person name="Wiemann S."/>
            <person name="Schupp I."/>
        </authorList>
    </citation>
    <scope>NUCLEOTIDE SEQUENCE [LARGE SCALE MRNA] OF 6-251</scope>
    <source>
        <tissue>Testis</tissue>
    </source>
</reference>
<reference key="6">
    <citation type="journal article" date="1989" name="Differentiation">
        <title>Differential expression of human HOX-2 genes along the anterior-posterior axis in embryonic central nervous system.</title>
        <authorList>
            <person name="Giampaolo A."/>
            <person name="Acampora D."/>
            <person name="Zappavigna V."/>
            <person name="Pannese M."/>
            <person name="D'Esposito M."/>
            <person name="Care A."/>
            <person name="Faiella A."/>
            <person name="Stornaiuolo A."/>
            <person name="Russo G."/>
            <person name="Simeone A."/>
            <person name="Boncinelli E."/>
            <person name="Peschle C."/>
        </authorList>
    </citation>
    <scope>NUCLEOTIDE SEQUENCE OF 160-227</scope>
    <source>
        <tissue>Placenta</tissue>
    </source>
</reference>
<reference key="7">
    <citation type="journal article" date="1989" name="Genome">
        <title>Organization of human class I homeobox genes.</title>
        <authorList>
            <person name="Boncinelli E."/>
            <person name="Acampora D."/>
            <person name="Pannese M."/>
            <person name="D'Esposito M."/>
            <person name="Somma R."/>
            <person name="Gaudino G."/>
            <person name="Stornaiuolo A."/>
            <person name="Cafiero M."/>
            <person name="Faiella A."/>
            <person name="Simeone A."/>
        </authorList>
    </citation>
    <scope>NUCLEOTIDE SEQUENCE [GENOMIC DNA] OF 162-227</scope>
</reference>
<reference key="8">
    <citation type="journal article" date="2013" name="J. Proteome Res.">
        <title>Toward a comprehensive characterization of a human cancer cell phosphoproteome.</title>
        <authorList>
            <person name="Zhou H."/>
            <person name="Di Palma S."/>
            <person name="Preisinger C."/>
            <person name="Peng M."/>
            <person name="Polat A.N."/>
            <person name="Heck A.J."/>
            <person name="Mohammed S."/>
        </authorList>
    </citation>
    <scope>PHOSPHORYLATION [LARGE SCALE ANALYSIS] AT SER-90</scope>
    <scope>IDENTIFICATION BY MASS SPECTROMETRY [LARGE SCALE ANALYSIS]</scope>
    <source>
        <tissue>Erythroleukemia</tissue>
    </source>
</reference>
<gene>
    <name type="primary">HOXB4</name>
    <name type="synonym">HOX2F</name>
</gene>
<dbReference type="EMBL" id="X16174">
    <property type="protein sequence ID" value="CAA34296.1"/>
    <property type="molecule type" value="Genomic_DNA"/>
</dbReference>
<dbReference type="EMBL" id="AF287967">
    <property type="protein sequence ID" value="AAG31554.1"/>
    <property type="molecule type" value="Genomic_DNA"/>
</dbReference>
<dbReference type="EMBL" id="AF307160">
    <property type="protein sequence ID" value="AAG45052.1"/>
    <property type="molecule type" value="Genomic_DNA"/>
</dbReference>
<dbReference type="EMBL" id="BC049204">
    <property type="protein sequence ID" value="AAH49204.1"/>
    <property type="molecule type" value="mRNA"/>
</dbReference>
<dbReference type="EMBL" id="AL137449">
    <property type="protein sequence ID" value="CAB70742.1"/>
    <property type="molecule type" value="mRNA"/>
</dbReference>
<dbReference type="CCDS" id="CCDS11529.1"/>
<dbReference type="PIR" id="B60492">
    <property type="entry name" value="B60492"/>
</dbReference>
<dbReference type="PIR" id="T46446">
    <property type="entry name" value="T46446"/>
</dbReference>
<dbReference type="RefSeq" id="NP_076920.1">
    <property type="nucleotide sequence ID" value="NM_024015.5"/>
</dbReference>
<dbReference type="SMR" id="P17483"/>
<dbReference type="BioGRID" id="109454">
    <property type="interactions" value="6"/>
</dbReference>
<dbReference type="ELM" id="P17483"/>
<dbReference type="FunCoup" id="P17483">
    <property type="interactions" value="1377"/>
</dbReference>
<dbReference type="IntAct" id="P17483">
    <property type="interactions" value="1"/>
</dbReference>
<dbReference type="STRING" id="9606.ENSP00000328928"/>
<dbReference type="iPTMnet" id="P17483"/>
<dbReference type="PhosphoSitePlus" id="P17483"/>
<dbReference type="BioMuta" id="HOXB4"/>
<dbReference type="DMDM" id="547692"/>
<dbReference type="jPOST" id="P17483"/>
<dbReference type="MassIVE" id="P17483"/>
<dbReference type="PaxDb" id="9606-ENSP00000328928"/>
<dbReference type="PeptideAtlas" id="P17483"/>
<dbReference type="ProteomicsDB" id="53477"/>
<dbReference type="Pumba" id="P17483"/>
<dbReference type="Antibodypedia" id="17849">
    <property type="antibodies" value="313 antibodies from 35 providers"/>
</dbReference>
<dbReference type="DNASU" id="3214"/>
<dbReference type="Ensembl" id="ENST00000332503.6">
    <property type="protein sequence ID" value="ENSP00000328928.5"/>
    <property type="gene ID" value="ENSG00000182742.6"/>
</dbReference>
<dbReference type="GeneID" id="3214"/>
<dbReference type="KEGG" id="hsa:3214"/>
<dbReference type="MANE-Select" id="ENST00000332503.6">
    <property type="protein sequence ID" value="ENSP00000328928.5"/>
    <property type="RefSeq nucleotide sequence ID" value="NM_024015.5"/>
    <property type="RefSeq protein sequence ID" value="NP_076920.1"/>
</dbReference>
<dbReference type="UCSC" id="uc002inp.4">
    <property type="organism name" value="human"/>
</dbReference>
<dbReference type="AGR" id="HGNC:5115"/>
<dbReference type="CTD" id="3214"/>
<dbReference type="DisGeNET" id="3214"/>
<dbReference type="GeneCards" id="HOXB4"/>
<dbReference type="HGNC" id="HGNC:5115">
    <property type="gene designation" value="HOXB4"/>
</dbReference>
<dbReference type="HPA" id="ENSG00000182742">
    <property type="expression patterns" value="Tissue enhanced (epididymis)"/>
</dbReference>
<dbReference type="MIM" id="142965">
    <property type="type" value="gene"/>
</dbReference>
<dbReference type="neXtProt" id="NX_P17483"/>
<dbReference type="OpenTargets" id="ENSG00000182742"/>
<dbReference type="PharmGKB" id="PA29391"/>
<dbReference type="VEuPathDB" id="HostDB:ENSG00000182742"/>
<dbReference type="eggNOG" id="KOG0489">
    <property type="taxonomic scope" value="Eukaryota"/>
</dbReference>
<dbReference type="GeneTree" id="ENSGT00940000162072"/>
<dbReference type="HOGENOM" id="CLU_061398_0_0_1"/>
<dbReference type="InParanoid" id="P17483"/>
<dbReference type="OMA" id="EPPYTQC"/>
<dbReference type="OrthoDB" id="6159439at2759"/>
<dbReference type="PAN-GO" id="P17483">
    <property type="GO annotations" value="6 GO annotations based on evolutionary models"/>
</dbReference>
<dbReference type="PhylomeDB" id="P17483"/>
<dbReference type="TreeFam" id="TF352857"/>
<dbReference type="PathwayCommons" id="P17483"/>
<dbReference type="Reactome" id="R-HSA-5617472">
    <property type="pathway name" value="Activation of anterior HOX genes in hindbrain development during early embryogenesis"/>
</dbReference>
<dbReference type="Reactome" id="R-HSA-9830364">
    <property type="pathway name" value="Formation of the nephric duct"/>
</dbReference>
<dbReference type="SignaLink" id="P17483"/>
<dbReference type="SIGNOR" id="P17483"/>
<dbReference type="BioGRID-ORCS" id="3214">
    <property type="hits" value="18 hits in 1181 CRISPR screens"/>
</dbReference>
<dbReference type="GeneWiki" id="HOXB4"/>
<dbReference type="GenomeRNAi" id="3214"/>
<dbReference type="Pharos" id="P17483">
    <property type="development level" value="Tbio"/>
</dbReference>
<dbReference type="PRO" id="PR:P17483"/>
<dbReference type="Proteomes" id="UP000005640">
    <property type="component" value="Chromosome 17"/>
</dbReference>
<dbReference type="RNAct" id="P17483">
    <property type="molecule type" value="protein"/>
</dbReference>
<dbReference type="Bgee" id="ENSG00000182742">
    <property type="expression patterns" value="Expressed in right uterine tube and 80 other cell types or tissues"/>
</dbReference>
<dbReference type="GO" id="GO:0005813">
    <property type="term" value="C:centrosome"/>
    <property type="evidence" value="ECO:0000314"/>
    <property type="project" value="HPA"/>
</dbReference>
<dbReference type="GO" id="GO:0000785">
    <property type="term" value="C:chromatin"/>
    <property type="evidence" value="ECO:0000247"/>
    <property type="project" value="NTNU_SB"/>
</dbReference>
<dbReference type="GO" id="GO:0005654">
    <property type="term" value="C:nucleoplasm"/>
    <property type="evidence" value="ECO:0000314"/>
    <property type="project" value="HPA"/>
</dbReference>
<dbReference type="GO" id="GO:0000981">
    <property type="term" value="F:DNA-binding transcription factor activity, RNA polymerase II-specific"/>
    <property type="evidence" value="ECO:0000247"/>
    <property type="project" value="NTNU_SB"/>
</dbReference>
<dbReference type="GO" id="GO:0000978">
    <property type="term" value="F:RNA polymerase II cis-regulatory region sequence-specific DNA binding"/>
    <property type="evidence" value="ECO:0000318"/>
    <property type="project" value="GO_Central"/>
</dbReference>
<dbReference type="GO" id="GO:1990837">
    <property type="term" value="F:sequence-specific double-stranded DNA binding"/>
    <property type="evidence" value="ECO:0000314"/>
    <property type="project" value="ARUK-UCL"/>
</dbReference>
<dbReference type="GO" id="GO:0009952">
    <property type="term" value="P:anterior/posterior pattern specification"/>
    <property type="evidence" value="ECO:0000318"/>
    <property type="project" value="GO_Central"/>
</dbReference>
<dbReference type="GO" id="GO:0048539">
    <property type="term" value="P:bone marrow development"/>
    <property type="evidence" value="ECO:0007669"/>
    <property type="project" value="Ensembl"/>
</dbReference>
<dbReference type="GO" id="GO:0060216">
    <property type="term" value="P:definitive hemopoiesis"/>
    <property type="evidence" value="ECO:0007669"/>
    <property type="project" value="Ensembl"/>
</dbReference>
<dbReference type="GO" id="GO:0048704">
    <property type="term" value="P:embryonic skeletal system morphogenesis"/>
    <property type="evidence" value="ECO:0000318"/>
    <property type="project" value="GO_Central"/>
</dbReference>
<dbReference type="GO" id="GO:0060218">
    <property type="term" value="P:hematopoietic stem cell differentiation"/>
    <property type="evidence" value="ECO:0000314"/>
    <property type="project" value="BHF-UCL"/>
</dbReference>
<dbReference type="GO" id="GO:0071425">
    <property type="term" value="P:hematopoietic stem cell proliferation"/>
    <property type="evidence" value="ECO:0007669"/>
    <property type="project" value="Ensembl"/>
</dbReference>
<dbReference type="GO" id="GO:0002011">
    <property type="term" value="P:morphogenesis of an epithelial sheet"/>
    <property type="evidence" value="ECO:0007669"/>
    <property type="project" value="Ensembl"/>
</dbReference>
<dbReference type="GO" id="GO:0000122">
    <property type="term" value="P:negative regulation of transcription by RNA polymerase II"/>
    <property type="evidence" value="ECO:0007669"/>
    <property type="project" value="Ensembl"/>
</dbReference>
<dbReference type="GO" id="GO:2000738">
    <property type="term" value="P:positive regulation of stem cell differentiation"/>
    <property type="evidence" value="ECO:0000314"/>
    <property type="project" value="BHF-UCL"/>
</dbReference>
<dbReference type="GO" id="GO:0045944">
    <property type="term" value="P:positive regulation of transcription by RNA polymerase II"/>
    <property type="evidence" value="ECO:0000314"/>
    <property type="project" value="BHF-UCL"/>
</dbReference>
<dbReference type="GO" id="GO:0048103">
    <property type="term" value="P:somatic stem cell division"/>
    <property type="evidence" value="ECO:0007669"/>
    <property type="project" value="Ensembl"/>
</dbReference>
<dbReference type="GO" id="GO:0048536">
    <property type="term" value="P:spleen development"/>
    <property type="evidence" value="ECO:0007669"/>
    <property type="project" value="Ensembl"/>
</dbReference>
<dbReference type="CDD" id="cd00086">
    <property type="entry name" value="homeodomain"/>
    <property type="match status" value="1"/>
</dbReference>
<dbReference type="FunFam" id="1.10.10.60:FF:000029">
    <property type="entry name" value="Homeobox protein Hox-D4"/>
    <property type="match status" value="1"/>
</dbReference>
<dbReference type="Gene3D" id="1.10.10.60">
    <property type="entry name" value="Homeodomain-like"/>
    <property type="match status" value="1"/>
</dbReference>
<dbReference type="InterPro" id="IPR050609">
    <property type="entry name" value="Antp_homeobox_Deformed_sf"/>
</dbReference>
<dbReference type="InterPro" id="IPR001356">
    <property type="entry name" value="HD"/>
</dbReference>
<dbReference type="InterPro" id="IPR020479">
    <property type="entry name" value="HD_metazoa"/>
</dbReference>
<dbReference type="InterPro" id="IPR017995">
    <property type="entry name" value="Homeobox_antennapedia"/>
</dbReference>
<dbReference type="InterPro" id="IPR001827">
    <property type="entry name" value="Homeobox_Antennapedia_CS"/>
</dbReference>
<dbReference type="InterPro" id="IPR017970">
    <property type="entry name" value="Homeobox_CS"/>
</dbReference>
<dbReference type="InterPro" id="IPR009057">
    <property type="entry name" value="Homeodomain-like_sf"/>
</dbReference>
<dbReference type="PANTHER" id="PTHR45771:SF3">
    <property type="entry name" value="HOMEOBOX PROTEIN HOX-B4"/>
    <property type="match status" value="1"/>
</dbReference>
<dbReference type="PANTHER" id="PTHR45771">
    <property type="entry name" value="HOMEOTIC PROTEIN DEFORMED"/>
    <property type="match status" value="1"/>
</dbReference>
<dbReference type="Pfam" id="PF00046">
    <property type="entry name" value="Homeodomain"/>
    <property type="match status" value="1"/>
</dbReference>
<dbReference type="PRINTS" id="PR00025">
    <property type="entry name" value="ANTENNAPEDIA"/>
</dbReference>
<dbReference type="PRINTS" id="PR00024">
    <property type="entry name" value="HOMEOBOX"/>
</dbReference>
<dbReference type="SMART" id="SM00389">
    <property type="entry name" value="HOX"/>
    <property type="match status" value="1"/>
</dbReference>
<dbReference type="SUPFAM" id="SSF101447">
    <property type="entry name" value="Formin homology 2 domain (FH2 domain)"/>
    <property type="match status" value="1"/>
</dbReference>
<dbReference type="SUPFAM" id="SSF46689">
    <property type="entry name" value="Homeodomain-like"/>
    <property type="match status" value="1"/>
</dbReference>
<dbReference type="PROSITE" id="PS00032">
    <property type="entry name" value="ANTENNAPEDIA"/>
    <property type="match status" value="1"/>
</dbReference>
<dbReference type="PROSITE" id="PS00027">
    <property type="entry name" value="HOMEOBOX_1"/>
    <property type="match status" value="1"/>
</dbReference>
<dbReference type="PROSITE" id="PS50071">
    <property type="entry name" value="HOMEOBOX_2"/>
    <property type="match status" value="1"/>
</dbReference>
<protein>
    <recommendedName>
        <fullName>Homeobox protein Hox-B4</fullName>
    </recommendedName>
    <alternativeName>
        <fullName>Homeobox protein Hox-2.6</fullName>
    </alternativeName>
    <alternativeName>
        <fullName>Homeobox protein Hox-2F</fullName>
    </alternativeName>
</protein>
<evidence type="ECO:0000255" key="1">
    <source>
        <dbReference type="PROSITE-ProRule" id="PRU00108"/>
    </source>
</evidence>
<evidence type="ECO:0000256" key="2">
    <source>
        <dbReference type="SAM" id="MobiDB-lite"/>
    </source>
</evidence>
<evidence type="ECO:0000305" key="3"/>
<evidence type="ECO:0007744" key="4">
    <source>
    </source>
</evidence>
<organism>
    <name type="scientific">Homo sapiens</name>
    <name type="common">Human</name>
    <dbReference type="NCBI Taxonomy" id="9606"/>
    <lineage>
        <taxon>Eukaryota</taxon>
        <taxon>Metazoa</taxon>
        <taxon>Chordata</taxon>
        <taxon>Craniata</taxon>
        <taxon>Vertebrata</taxon>
        <taxon>Euteleostomi</taxon>
        <taxon>Mammalia</taxon>
        <taxon>Eutheria</taxon>
        <taxon>Euarchontoglires</taxon>
        <taxon>Primates</taxon>
        <taxon>Haplorrhini</taxon>
        <taxon>Catarrhini</taxon>
        <taxon>Hominidae</taxon>
        <taxon>Homo</taxon>
    </lineage>
</organism>
<sequence>MAMSSFLINSNYVDPKFPPCEEYSQSDYLPSDHSPGYYAGGQRRESSFQPEAGFGRRAACTVQRYAACRDPGPPPPPPPPPPPPPPPGLSPRAPAPPPAGALLPEPGQRCEAVSSSPPPPPCAQNPLHPSPSHSACKEPVVYPWMRKVHVSTVNPNYAGGEPKRSRTAYTRQQVLELEKEFHYNRYLTRRRRVEIAHALCLSERQIKIWFQNRRMKWKKDHKLPNTKIRSGGAAGSAGGPPGRPNGGPRAL</sequence>
<accession>P17483</accession>
<accession>Q9NTA0</accession>